<reference key="1">
    <citation type="journal article" date="2008" name="BMC Genomics">
        <title>Genome sequence and rapid evolution of the rice pathogen Xanthomonas oryzae pv. oryzae PXO99A.</title>
        <authorList>
            <person name="Salzberg S.L."/>
            <person name="Sommer D.D."/>
            <person name="Schatz M.C."/>
            <person name="Phillippy A.M."/>
            <person name="Rabinowicz P.D."/>
            <person name="Tsuge S."/>
            <person name="Furutani A."/>
            <person name="Ochiai H."/>
            <person name="Delcher A.L."/>
            <person name="Kelley D."/>
            <person name="Madupu R."/>
            <person name="Puiu D."/>
            <person name="Radune D."/>
            <person name="Shumway M."/>
            <person name="Trapnell C."/>
            <person name="Aparna G."/>
            <person name="Jha G."/>
            <person name="Pandey A."/>
            <person name="Patil P.B."/>
            <person name="Ishihara H."/>
            <person name="Meyer D.F."/>
            <person name="Szurek B."/>
            <person name="Verdier V."/>
            <person name="Koebnik R."/>
            <person name="Dow J.M."/>
            <person name="Ryan R.P."/>
            <person name="Hirata H."/>
            <person name="Tsuyumu S."/>
            <person name="Won Lee S."/>
            <person name="Seo Y.-S."/>
            <person name="Sriariyanum M."/>
            <person name="Ronald P.C."/>
            <person name="Sonti R.V."/>
            <person name="Van Sluys M.-A."/>
            <person name="Leach J.E."/>
            <person name="White F.F."/>
            <person name="Bogdanove A.J."/>
        </authorList>
    </citation>
    <scope>NUCLEOTIDE SEQUENCE [LARGE SCALE GENOMIC DNA]</scope>
    <source>
        <strain>PXO99A</strain>
    </source>
</reference>
<organism>
    <name type="scientific">Xanthomonas oryzae pv. oryzae (strain PXO99A)</name>
    <dbReference type="NCBI Taxonomy" id="360094"/>
    <lineage>
        <taxon>Bacteria</taxon>
        <taxon>Pseudomonadati</taxon>
        <taxon>Pseudomonadota</taxon>
        <taxon>Gammaproteobacteria</taxon>
        <taxon>Lysobacterales</taxon>
        <taxon>Lysobacteraceae</taxon>
        <taxon>Xanthomonas</taxon>
    </lineage>
</organism>
<evidence type="ECO:0000255" key="1">
    <source>
        <dbReference type="HAMAP-Rule" id="MF_00135"/>
    </source>
</evidence>
<sequence length="222" mass="24118">MNRSLYRTRIKFCGMTRAGDIRLAGELGVDAVGFIFAHGSPRRVAPAEARAMRQATAPMVDVVALFRNNSKEEVREVVRTVRPTLLQFHGEEEDAFCRSFNLPYLKAVPMGSTGVNGEDANARTLQLSYPNTAGFLFDSHAPGAGGGTGKTFDWSRLPTGLHRPFLLAGGINAGNVFDAIVATLPWGVDVSSGVELAPGIKDGHKMRKFVEEVRRADCHEMS</sequence>
<proteinExistence type="inferred from homology"/>
<name>TRPF_XANOP</name>
<comment type="catalytic activity">
    <reaction evidence="1">
        <text>N-(5-phospho-beta-D-ribosyl)anthranilate = 1-(2-carboxyphenylamino)-1-deoxy-D-ribulose 5-phosphate</text>
        <dbReference type="Rhea" id="RHEA:21540"/>
        <dbReference type="ChEBI" id="CHEBI:18277"/>
        <dbReference type="ChEBI" id="CHEBI:58613"/>
        <dbReference type="EC" id="5.3.1.24"/>
    </reaction>
</comment>
<comment type="pathway">
    <text evidence="1">Amino-acid biosynthesis; L-tryptophan biosynthesis; L-tryptophan from chorismate: step 3/5.</text>
</comment>
<comment type="similarity">
    <text evidence="1">Belongs to the TrpF family.</text>
</comment>
<protein>
    <recommendedName>
        <fullName evidence="1">N-(5'-phosphoribosyl)anthranilate isomerase</fullName>
        <shortName evidence="1">PRAI</shortName>
        <ecNumber evidence="1">5.3.1.24</ecNumber>
    </recommendedName>
</protein>
<accession>B2SVN9</accession>
<feature type="chain" id="PRO_1000095951" description="N-(5'-phosphoribosyl)anthranilate isomerase">
    <location>
        <begin position="1"/>
        <end position="222"/>
    </location>
</feature>
<keyword id="KW-0028">Amino-acid biosynthesis</keyword>
<keyword id="KW-0057">Aromatic amino acid biosynthesis</keyword>
<keyword id="KW-0413">Isomerase</keyword>
<keyword id="KW-0822">Tryptophan biosynthesis</keyword>
<gene>
    <name evidence="1" type="primary">trpF</name>
    <name type="ordered locus">PXO_01268</name>
</gene>
<dbReference type="EC" id="5.3.1.24" evidence="1"/>
<dbReference type="EMBL" id="CP000967">
    <property type="protein sequence ID" value="ACD60113.1"/>
    <property type="molecule type" value="Genomic_DNA"/>
</dbReference>
<dbReference type="RefSeq" id="WP_011259764.1">
    <property type="nucleotide sequence ID" value="NC_010717.2"/>
</dbReference>
<dbReference type="SMR" id="B2SVN9"/>
<dbReference type="KEGG" id="xop:PXO_01268"/>
<dbReference type="eggNOG" id="COG0135">
    <property type="taxonomic scope" value="Bacteria"/>
</dbReference>
<dbReference type="HOGENOM" id="CLU_076364_2_0_6"/>
<dbReference type="UniPathway" id="UPA00035">
    <property type="reaction ID" value="UER00042"/>
</dbReference>
<dbReference type="Proteomes" id="UP000001740">
    <property type="component" value="Chromosome"/>
</dbReference>
<dbReference type="GO" id="GO:0004640">
    <property type="term" value="F:phosphoribosylanthranilate isomerase activity"/>
    <property type="evidence" value="ECO:0007669"/>
    <property type="project" value="UniProtKB-UniRule"/>
</dbReference>
<dbReference type="GO" id="GO:0000162">
    <property type="term" value="P:L-tryptophan biosynthetic process"/>
    <property type="evidence" value="ECO:0007669"/>
    <property type="project" value="UniProtKB-UniRule"/>
</dbReference>
<dbReference type="CDD" id="cd00405">
    <property type="entry name" value="PRAI"/>
    <property type="match status" value="1"/>
</dbReference>
<dbReference type="FunFam" id="3.20.20.70:FF:000176">
    <property type="entry name" value="N-(5'-phosphoribosyl)anthranilate isomerase"/>
    <property type="match status" value="1"/>
</dbReference>
<dbReference type="Gene3D" id="3.20.20.70">
    <property type="entry name" value="Aldolase class I"/>
    <property type="match status" value="1"/>
</dbReference>
<dbReference type="HAMAP" id="MF_00135">
    <property type="entry name" value="PRAI"/>
    <property type="match status" value="1"/>
</dbReference>
<dbReference type="InterPro" id="IPR013785">
    <property type="entry name" value="Aldolase_TIM"/>
</dbReference>
<dbReference type="InterPro" id="IPR001240">
    <property type="entry name" value="PRAI_dom"/>
</dbReference>
<dbReference type="InterPro" id="IPR011060">
    <property type="entry name" value="RibuloseP-bd_barrel"/>
</dbReference>
<dbReference type="InterPro" id="IPR044643">
    <property type="entry name" value="TrpF_fam"/>
</dbReference>
<dbReference type="NCBIfam" id="NF002296">
    <property type="entry name" value="PRK01222.1-2"/>
    <property type="match status" value="1"/>
</dbReference>
<dbReference type="NCBIfam" id="NF002298">
    <property type="entry name" value="PRK01222.1-4"/>
    <property type="match status" value="1"/>
</dbReference>
<dbReference type="PANTHER" id="PTHR42894">
    <property type="entry name" value="N-(5'-PHOSPHORIBOSYL)ANTHRANILATE ISOMERASE"/>
    <property type="match status" value="1"/>
</dbReference>
<dbReference type="PANTHER" id="PTHR42894:SF1">
    <property type="entry name" value="N-(5'-PHOSPHORIBOSYL)ANTHRANILATE ISOMERASE"/>
    <property type="match status" value="1"/>
</dbReference>
<dbReference type="Pfam" id="PF00697">
    <property type="entry name" value="PRAI"/>
    <property type="match status" value="1"/>
</dbReference>
<dbReference type="SUPFAM" id="SSF51366">
    <property type="entry name" value="Ribulose-phoshate binding barrel"/>
    <property type="match status" value="1"/>
</dbReference>